<name>RSBW_MYCTO</name>
<keyword id="KW-0067">ATP-binding</keyword>
<keyword id="KW-0378">Hydrolase</keyword>
<keyword id="KW-0547">Nucleotide-binding</keyword>
<keyword id="KW-1185">Reference proteome</keyword>
<keyword id="KW-0804">Transcription</keyword>
<keyword id="KW-0805">Transcription regulation</keyword>
<comment type="function">
    <text evidence="1">A cognate anti-sigma factor for alternative sigma factor SigF. Alternative sigma factors are held in an inactive form by an anti-sigma factor. Binds ATP and GTP, may hydrolyze both (By similarity).</text>
</comment>
<comment type="subunit">
    <text evidence="1">Homodimer.</text>
</comment>
<comment type="similarity">
    <text evidence="4">Belongs to the anti-sigma-factor family.</text>
</comment>
<comment type="sequence caution" evidence="4">
    <conflict type="erroneous initiation">
        <sequence resource="EMBL-CDS" id="AAK47729"/>
    </conflict>
    <text>Truncated N-terminus.</text>
</comment>
<dbReference type="EMBL" id="AE000516">
    <property type="protein sequence ID" value="AAK47729.1"/>
    <property type="status" value="ALT_INIT"/>
    <property type="molecule type" value="Genomic_DNA"/>
</dbReference>
<dbReference type="SMR" id="P9WGX6"/>
<dbReference type="KEGG" id="mtc:MT3386"/>
<dbReference type="HOGENOM" id="CLU_116681_0_0_11"/>
<dbReference type="Proteomes" id="UP000001020">
    <property type="component" value="Chromosome"/>
</dbReference>
<dbReference type="GO" id="GO:0005524">
    <property type="term" value="F:ATP binding"/>
    <property type="evidence" value="ECO:0007669"/>
    <property type="project" value="UniProtKB-KW"/>
</dbReference>
<dbReference type="GO" id="GO:0016787">
    <property type="term" value="F:hydrolase activity"/>
    <property type="evidence" value="ECO:0007669"/>
    <property type="project" value="UniProtKB-KW"/>
</dbReference>
<feature type="chain" id="PRO_0000428285" description="Anti-sigma-F factor RsbW">
    <location>
        <begin position="1"/>
        <end position="168"/>
    </location>
</feature>
<feature type="region of interest" description="Disordered" evidence="3">
    <location>
        <begin position="1"/>
        <end position="31"/>
    </location>
</feature>
<feature type="compositionally biased region" description="Polar residues" evidence="3">
    <location>
        <begin position="7"/>
        <end position="16"/>
    </location>
</feature>
<feature type="binding site" evidence="2">
    <location>
        <begin position="124"/>
        <end position="128"/>
    </location>
    <ligand>
        <name>ATP</name>
        <dbReference type="ChEBI" id="CHEBI:30616"/>
    </ligand>
</feature>
<protein>
    <recommendedName>
        <fullName>Anti-sigma-F factor RsbW</fullName>
    </recommendedName>
    <alternativeName>
        <fullName>Anti-sigma-F factor UsfX</fullName>
    </alternativeName>
    <alternativeName>
        <fullName>Regulator of SigF</fullName>
    </alternativeName>
    <alternativeName>
        <fullName>Sigma-F anti-sigma factor RsbW</fullName>
    </alternativeName>
</protein>
<organism>
    <name type="scientific">Mycobacterium tuberculosis (strain CDC 1551 / Oshkosh)</name>
    <dbReference type="NCBI Taxonomy" id="83331"/>
    <lineage>
        <taxon>Bacteria</taxon>
        <taxon>Bacillati</taxon>
        <taxon>Actinomycetota</taxon>
        <taxon>Actinomycetes</taxon>
        <taxon>Mycobacteriales</taxon>
        <taxon>Mycobacteriaceae</taxon>
        <taxon>Mycobacterium</taxon>
        <taxon>Mycobacterium tuberculosis complex</taxon>
    </lineage>
</organism>
<sequence>MTDQLEDQTQGGSTVDRSLPGGCMADSDLPTKGRQRGVRAVELNVAARLENLALLRTLVGAIGTFEDLDFDAVADLRLAVDEVCTRLIRSALPDATLRLVVDPRKDEVVVEASAACDTHDVVAPGSFSWHVLTALADDVQTFHDGRQPDVAGSVFGITLTARRAASSR</sequence>
<proteinExistence type="inferred from homology"/>
<reference key="1">
    <citation type="journal article" date="2002" name="J. Bacteriol.">
        <title>Whole-genome comparison of Mycobacterium tuberculosis clinical and laboratory strains.</title>
        <authorList>
            <person name="Fleischmann R.D."/>
            <person name="Alland D."/>
            <person name="Eisen J.A."/>
            <person name="Carpenter L."/>
            <person name="White O."/>
            <person name="Peterson J.D."/>
            <person name="DeBoy R.T."/>
            <person name="Dodson R.J."/>
            <person name="Gwinn M.L."/>
            <person name="Haft D.H."/>
            <person name="Hickey E.K."/>
            <person name="Kolonay J.F."/>
            <person name="Nelson W.C."/>
            <person name="Umayam L.A."/>
            <person name="Ermolaeva M.D."/>
            <person name="Salzberg S.L."/>
            <person name="Delcher A."/>
            <person name="Utterback T.R."/>
            <person name="Weidman J.F."/>
            <person name="Khouri H.M."/>
            <person name="Gill J."/>
            <person name="Mikula A."/>
            <person name="Bishai W."/>
            <person name="Jacobs W.R. Jr."/>
            <person name="Venter J.C."/>
            <person name="Fraser C.M."/>
        </authorList>
    </citation>
    <scope>NUCLEOTIDE SEQUENCE [LARGE SCALE GENOMIC DNA]</scope>
    <source>
        <strain>CDC 1551 / Oshkosh</strain>
    </source>
</reference>
<evidence type="ECO:0000250" key="1"/>
<evidence type="ECO:0000255" key="2"/>
<evidence type="ECO:0000256" key="3">
    <source>
        <dbReference type="SAM" id="MobiDB-lite"/>
    </source>
</evidence>
<evidence type="ECO:0000305" key="4"/>
<gene>
    <name type="primary">rsbW</name>
    <name type="synonym">usfX</name>
    <name type="ordered locus">MT3386</name>
</gene>
<accession>P9WGX6</accession>
<accession>Q798J8</accession>
<accession>Q7D5S1</accession>